<protein>
    <recommendedName>
        <fullName>Aminodeoxyfutalosine deaminase</fullName>
        <shortName>AFL deaminase</shortName>
        <shortName>Aminofutalosine deaminase</shortName>
        <ecNumber evidence="3">3.5.4.40</ecNumber>
    </recommendedName>
</protein>
<keyword id="KW-0002">3D-structure</keyword>
<keyword id="KW-0378">Hydrolase</keyword>
<keyword id="KW-0474">Menaquinone biosynthesis</keyword>
<keyword id="KW-0479">Metal-binding</keyword>
<keyword id="KW-1185">Reference proteome</keyword>
<keyword id="KW-0862">Zinc</keyword>
<organism>
    <name type="scientific">Deinococcus radiodurans (strain ATCC 13939 / DSM 20539 / JCM 16871 / CCUG 27074 / LMG 4051 / NBRC 15346 / NCIMB 9279 / VKM B-1422 / R1)</name>
    <dbReference type="NCBI Taxonomy" id="243230"/>
    <lineage>
        <taxon>Bacteria</taxon>
        <taxon>Thermotogati</taxon>
        <taxon>Deinococcota</taxon>
        <taxon>Deinococci</taxon>
        <taxon>Deinococcales</taxon>
        <taxon>Deinococcaceae</taxon>
        <taxon>Deinococcus</taxon>
    </lineage>
</organism>
<comment type="function">
    <text evidence="3">Catalyzes the deamination of aminodeoxyfutalosine (AFL) into futalosine (FL). To a lesser extent, can also deaminate 5'-deoxyadenosine, 5'-methylthioadenosine, 2'-deoxyadenosine, adenosine, 1-(6-amino-9H-purin-9-yl)-1-deoxy-N-ethyl-beta-D-ribofuranuronamide (NECA), and S-adenosylhomocysteine.</text>
</comment>
<comment type="catalytic activity">
    <reaction evidence="3">
        <text>6-amino-6-deoxyfutalosine + H2O + H(+) = futalosine + NH4(+)</text>
        <dbReference type="Rhea" id="RHEA:40075"/>
        <dbReference type="ChEBI" id="CHEBI:15377"/>
        <dbReference type="ChEBI" id="CHEBI:15378"/>
        <dbReference type="ChEBI" id="CHEBI:28938"/>
        <dbReference type="ChEBI" id="CHEBI:58863"/>
        <dbReference type="ChEBI" id="CHEBI:64286"/>
        <dbReference type="EC" id="3.5.4.40"/>
    </reaction>
</comment>
<comment type="cofactor">
    <cofactor evidence="3">
        <name>Zn(2+)</name>
        <dbReference type="ChEBI" id="CHEBI:29105"/>
    </cofactor>
    <text evidence="3">Binds 1 zinc ion per subunit.</text>
</comment>
<comment type="biophysicochemical properties">
    <kinetics>
        <KM evidence="3">1.8 uM for aminodeoxyfutalosine</KM>
        <KM evidence="3">37 uM for 2'-deoxyadenosine</KM>
        <text>kcat is 8.6 sec(-1) with aminodeoxyfutalosine as substrate. kcat is 0.72 sec(-1) with 2'-deoxyadenosine as substrate.</text>
    </kinetics>
</comment>
<comment type="pathway">
    <text>Quinol/quinone metabolism; menaquinone biosynthesis.</text>
</comment>
<comment type="similarity">
    <text evidence="4">Belongs to the metallo-dependent hydrolases superfamily.</text>
</comment>
<dbReference type="EC" id="3.5.4.40" evidence="3"/>
<dbReference type="EMBL" id="AE000513">
    <property type="protein sequence ID" value="AAF10399.1"/>
    <property type="molecule type" value="Genomic_DNA"/>
</dbReference>
<dbReference type="PIR" id="F75472">
    <property type="entry name" value="F75472"/>
</dbReference>
<dbReference type="RefSeq" id="NP_294548.1">
    <property type="nucleotide sequence ID" value="NC_001263.1"/>
</dbReference>
<dbReference type="PDB" id="2IMR">
    <property type="method" value="X-ray"/>
    <property type="resolution" value="1.78 A"/>
    <property type="chains" value="A=2-418"/>
</dbReference>
<dbReference type="PDBsum" id="2IMR"/>
<dbReference type="SMR" id="Q9RW45"/>
<dbReference type="STRING" id="243230.DR_0824"/>
<dbReference type="PaxDb" id="243230-DR_0824"/>
<dbReference type="EnsemblBacteria" id="AAF10399">
    <property type="protein sequence ID" value="AAF10399"/>
    <property type="gene ID" value="DR_0824"/>
</dbReference>
<dbReference type="KEGG" id="dra:DR_0824"/>
<dbReference type="PATRIC" id="fig|243230.17.peg.1005"/>
<dbReference type="eggNOG" id="COG0402">
    <property type="taxonomic scope" value="Bacteria"/>
</dbReference>
<dbReference type="HOGENOM" id="CLU_012358_2_5_0"/>
<dbReference type="InParanoid" id="Q9RW45"/>
<dbReference type="OrthoDB" id="9807210at2"/>
<dbReference type="BRENDA" id="3.5.4.40">
    <property type="organism ID" value="1856"/>
</dbReference>
<dbReference type="UniPathway" id="UPA00079"/>
<dbReference type="EvolutionaryTrace" id="Q9RW45"/>
<dbReference type="Proteomes" id="UP000002524">
    <property type="component" value="Chromosome 1"/>
</dbReference>
<dbReference type="GO" id="GO:0016810">
    <property type="term" value="F:hydrolase activity, acting on carbon-nitrogen (but not peptide) bonds"/>
    <property type="evidence" value="ECO:0007669"/>
    <property type="project" value="InterPro"/>
</dbReference>
<dbReference type="GO" id="GO:0046872">
    <property type="term" value="F:metal ion binding"/>
    <property type="evidence" value="ECO:0007669"/>
    <property type="project" value="UniProtKB-KW"/>
</dbReference>
<dbReference type="GO" id="GO:0009234">
    <property type="term" value="P:menaquinone biosynthetic process"/>
    <property type="evidence" value="ECO:0007669"/>
    <property type="project" value="UniProtKB-UniPathway"/>
</dbReference>
<dbReference type="FunFam" id="3.20.20.140:FF:000237">
    <property type="entry name" value="Aminodeoxyfutalosine deaminase"/>
    <property type="match status" value="1"/>
</dbReference>
<dbReference type="Gene3D" id="3.20.20.140">
    <property type="entry name" value="Metal-dependent hydrolases"/>
    <property type="match status" value="1"/>
</dbReference>
<dbReference type="Gene3D" id="2.30.40.10">
    <property type="entry name" value="Urease, subunit C, domain 1"/>
    <property type="match status" value="1"/>
</dbReference>
<dbReference type="InterPro" id="IPR006680">
    <property type="entry name" value="Amidohydro-rel"/>
</dbReference>
<dbReference type="InterPro" id="IPR011059">
    <property type="entry name" value="Metal-dep_hydrolase_composite"/>
</dbReference>
<dbReference type="InterPro" id="IPR032466">
    <property type="entry name" value="Metal_Hydrolase"/>
</dbReference>
<dbReference type="InterPro" id="IPR054418">
    <property type="entry name" value="MQNX/HUTI_composite_N"/>
</dbReference>
<dbReference type="InterPro" id="IPR050287">
    <property type="entry name" value="MTA/SAH_deaminase"/>
</dbReference>
<dbReference type="PANTHER" id="PTHR43794:SF11">
    <property type="entry name" value="AMIDOHYDROLASE-RELATED DOMAIN-CONTAINING PROTEIN"/>
    <property type="match status" value="1"/>
</dbReference>
<dbReference type="PANTHER" id="PTHR43794">
    <property type="entry name" value="AMINOHYDROLASE SSNA-RELATED"/>
    <property type="match status" value="1"/>
</dbReference>
<dbReference type="Pfam" id="PF01979">
    <property type="entry name" value="Amidohydro_1"/>
    <property type="match status" value="1"/>
</dbReference>
<dbReference type="Pfam" id="PF22039">
    <property type="entry name" value="HUTI_composite_bact"/>
    <property type="match status" value="1"/>
</dbReference>
<dbReference type="SUPFAM" id="SSF51338">
    <property type="entry name" value="Composite domain of metallo-dependent hydrolases"/>
    <property type="match status" value="1"/>
</dbReference>
<dbReference type="SUPFAM" id="SSF51556">
    <property type="entry name" value="Metallo-dependent hydrolases"/>
    <property type="match status" value="1"/>
</dbReference>
<feature type="chain" id="PRO_0000122306" description="Aminodeoxyfutalosine deaminase">
    <location>
        <begin position="1"/>
        <end position="418"/>
    </location>
</feature>
<feature type="active site" description="Proton donor" evidence="1">
    <location>
        <position position="241"/>
    </location>
</feature>
<feature type="binding site">
    <location>
        <position position="97"/>
    </location>
    <ligand>
        <name>Zn(2+)</name>
        <dbReference type="ChEBI" id="CHEBI:29105"/>
    </ligand>
</feature>
<feature type="binding site">
    <location>
        <position position="99"/>
    </location>
    <ligand>
        <name>Zn(2+)</name>
        <dbReference type="ChEBI" id="CHEBI:29105"/>
    </ligand>
</feature>
<feature type="binding site" evidence="2">
    <location>
        <position position="173"/>
    </location>
    <ligand>
        <name>substrate</name>
    </ligand>
</feature>
<feature type="binding site" evidence="2">
    <location>
        <position position="211"/>
    </location>
    <ligand>
        <name>substrate</name>
    </ligand>
</feature>
<feature type="binding site">
    <location>
        <position position="238"/>
    </location>
    <ligand>
        <name>Zn(2+)</name>
        <dbReference type="ChEBI" id="CHEBI:29105"/>
    </ligand>
</feature>
<feature type="binding site">
    <location>
        <position position="352"/>
    </location>
    <ligand>
        <name>Zn(2+)</name>
        <dbReference type="ChEBI" id="CHEBI:29105"/>
    </ligand>
</feature>
<feature type="strand" evidence="5">
    <location>
        <begin position="36"/>
        <end position="45"/>
    </location>
</feature>
<feature type="strand" evidence="5">
    <location>
        <begin position="51"/>
        <end position="60"/>
    </location>
</feature>
<feature type="strand" evidence="5">
    <location>
        <begin position="63"/>
        <end position="68"/>
    </location>
</feature>
<feature type="helix" evidence="5">
    <location>
        <begin position="70"/>
        <end position="76"/>
    </location>
</feature>
<feature type="strand" evidence="5">
    <location>
        <begin position="81"/>
        <end position="84"/>
    </location>
</feature>
<feature type="strand" evidence="5">
    <location>
        <begin position="87"/>
        <end position="91"/>
    </location>
</feature>
<feature type="strand" evidence="5">
    <location>
        <begin position="95"/>
        <end position="101"/>
    </location>
</feature>
<feature type="helix" evidence="5">
    <location>
        <begin position="104"/>
        <end position="109"/>
    </location>
</feature>
<feature type="helix" evidence="5">
    <location>
        <begin position="111"/>
        <end position="114"/>
    </location>
</feature>
<feature type="helix" evidence="5">
    <location>
        <begin position="117"/>
        <end position="123"/>
    </location>
</feature>
<feature type="helix" evidence="5">
    <location>
        <begin position="128"/>
        <end position="141"/>
    </location>
</feature>
<feature type="strand" evidence="5">
    <location>
        <begin position="147"/>
        <end position="151"/>
    </location>
</feature>
<feature type="helix" evidence="5">
    <location>
        <begin position="154"/>
        <end position="161"/>
    </location>
</feature>
<feature type="strand" evidence="5">
    <location>
        <begin position="168"/>
        <end position="174"/>
    </location>
</feature>
<feature type="helix" evidence="5">
    <location>
        <begin position="179"/>
        <end position="181"/>
    </location>
</feature>
<feature type="helix" evidence="5">
    <location>
        <begin position="182"/>
        <end position="197"/>
    </location>
</feature>
<feature type="strand" evidence="5">
    <location>
        <begin position="204"/>
        <end position="210"/>
    </location>
</feature>
<feature type="strand" evidence="5">
    <location>
        <begin position="213"/>
        <end position="216"/>
    </location>
</feature>
<feature type="helix" evidence="5">
    <location>
        <begin position="218"/>
        <end position="231"/>
    </location>
</feature>
<feature type="strand" evidence="5">
    <location>
        <begin position="235"/>
        <end position="240"/>
    </location>
</feature>
<feature type="helix" evidence="5">
    <location>
        <begin position="243"/>
        <end position="251"/>
    </location>
</feature>
<feature type="helix" evidence="5">
    <location>
        <begin position="257"/>
        <end position="259"/>
    </location>
</feature>
<feature type="helix" evidence="5">
    <location>
        <begin position="262"/>
        <end position="264"/>
    </location>
</feature>
<feature type="helix" evidence="5">
    <location>
        <begin position="269"/>
        <end position="273"/>
    </location>
</feature>
<feature type="helix" evidence="5">
    <location>
        <begin position="283"/>
        <end position="289"/>
    </location>
</feature>
<feature type="helix" evidence="5">
    <location>
        <begin position="293"/>
        <end position="295"/>
    </location>
</feature>
<feature type="strand" evidence="5">
    <location>
        <begin position="298"/>
        <end position="301"/>
    </location>
</feature>
<feature type="helix" evidence="5">
    <location>
        <begin position="307"/>
        <end position="316"/>
    </location>
</feature>
<feature type="strand" evidence="5">
    <location>
        <begin position="320"/>
        <end position="322"/>
    </location>
</feature>
<feature type="helix" evidence="5">
    <location>
        <begin position="324"/>
        <end position="329"/>
    </location>
</feature>
<feature type="helix" evidence="5">
    <location>
        <begin position="337"/>
        <end position="342"/>
    </location>
</feature>
<feature type="strand" evidence="5">
    <location>
        <begin position="347"/>
        <end position="349"/>
    </location>
</feature>
<feature type="helix" evidence="5">
    <location>
        <begin position="354"/>
        <end position="357"/>
    </location>
</feature>
<feature type="helix" evidence="5">
    <location>
        <begin position="363"/>
        <end position="372"/>
    </location>
</feature>
<feature type="helix" evidence="5">
    <location>
        <begin position="378"/>
        <end position="393"/>
    </location>
</feature>
<feature type="helix" evidence="5">
    <location>
        <begin position="408"/>
        <end position="410"/>
    </location>
</feature>
<feature type="helix" evidence="5">
    <location>
        <begin position="412"/>
        <end position="414"/>
    </location>
</feature>
<name>MQNX_DEIRA</name>
<evidence type="ECO:0000250" key="1"/>
<evidence type="ECO:0000255" key="2"/>
<evidence type="ECO:0000269" key="3">
    <source>
    </source>
</evidence>
<evidence type="ECO:0000305" key="4"/>
<evidence type="ECO:0007829" key="5">
    <source>
        <dbReference type="PDB" id="2IMR"/>
    </source>
</evidence>
<accession>Q9RW45</accession>
<gene>
    <name type="ordered locus">DR_0824</name>
</gene>
<proteinExistence type="evidence at protein level"/>
<sequence length="418" mass="45524">MRFSAVSRHHRGASIDPMTFSEATTPDALTPDAHTPRLLTCDVLYTGMGGAQSPGGVVVVGETVAAAGHPDELRRQYPHAAEERAGAVIAPPPVNAHTHLDMSAYEFQALPYFQWIPEVVIRGRHLRGVAAAQAGADTLTRLGAGGVGDIVWAPEVMDALLAREDLSGTLYFEVLNPFPDKADEVFAAARTHLERWRRLERPGLRLGLSPHTPFTVSHRLMRLLSDYAAGEGLPLQIHVAEHPTELEMFRTGGGPLWDNRMPALYPHTLAEVIGREPGPDLTPVRYLDELGVLAARPTLVHMVNVTPDDIARVARAGCAVVTCPRSNHHLECGTFDWPAFAAAGVEVALGTDSVASGETLNVREEVTFARQLYPGLDPRVLVRAAVKGGQRVVGGRTPFLRRGETWQEGFRWELSRDL</sequence>
<reference key="1">
    <citation type="journal article" date="1999" name="Science">
        <title>Genome sequence of the radioresistant bacterium Deinococcus radiodurans R1.</title>
        <authorList>
            <person name="White O."/>
            <person name="Eisen J.A."/>
            <person name="Heidelberg J.F."/>
            <person name="Hickey E.K."/>
            <person name="Peterson J.D."/>
            <person name="Dodson R.J."/>
            <person name="Haft D.H."/>
            <person name="Gwinn M.L."/>
            <person name="Nelson W.C."/>
            <person name="Richardson D.L."/>
            <person name="Moffat K.S."/>
            <person name="Qin H."/>
            <person name="Jiang L."/>
            <person name="Pamphile W."/>
            <person name="Crosby M."/>
            <person name="Shen M."/>
            <person name="Vamathevan J.J."/>
            <person name="Lam P."/>
            <person name="McDonald L.A."/>
            <person name="Utterback T.R."/>
            <person name="Zalewski C."/>
            <person name="Makarova K.S."/>
            <person name="Aravind L."/>
            <person name="Daly M.J."/>
            <person name="Minton K.W."/>
            <person name="Fleischmann R.D."/>
            <person name="Ketchum K.A."/>
            <person name="Nelson K.E."/>
            <person name="Salzberg S.L."/>
            <person name="Smith H.O."/>
            <person name="Venter J.C."/>
            <person name="Fraser C.M."/>
        </authorList>
    </citation>
    <scope>NUCLEOTIDE SEQUENCE [LARGE SCALE GENOMIC DNA]</scope>
    <source>
        <strain>ATCC 13939 / DSM 20539 / JCM 16871 / CCUG 27074 / LMG 4051 / NBRC 15346 / NCIMB 9279 / VKM B-1422 / R1</strain>
    </source>
</reference>
<reference key="2">
    <citation type="journal article" date="2013" name="Biochemistry">
        <title>Deamination of 6-aminodeoxyfutalosine in menaquinone biosynthesis by distantly related enzymes.</title>
        <authorList>
            <person name="Goble A.M."/>
            <person name="Toro R."/>
            <person name="Li X."/>
            <person name="Ornelas A."/>
            <person name="Fan H."/>
            <person name="Eswaramoorthy S."/>
            <person name="Patskovsky Y."/>
            <person name="Hillerich B."/>
            <person name="Seidel R."/>
            <person name="Sali A."/>
            <person name="Shoichet B.K."/>
            <person name="Almo S.C."/>
            <person name="Swaminathan S."/>
            <person name="Tanner M.E."/>
            <person name="Raushel F.M."/>
        </authorList>
    </citation>
    <scope>X-RAY CRYSTALLOGRAPHY (1.78 ANGSTROMS) IN COMPLEX WITH ZINC ION</scope>
    <scope>FUNCTION</scope>
    <scope>CATALYTIC ACTIVITY</scope>
    <scope>SUBSTRATE SPECIFICITY</scope>
    <scope>KINETIC PARAMETERS</scope>
    <scope>COFACTOR</scope>
    <source>
        <strain>ATCC 13939 / DSM 20539 / JCM 16871 / CCUG 27074 / LMG 4051 / NBRC 15346 / NCIMB 9279 / VKM B-1422 / R1</strain>
    </source>
</reference>